<reference key="1">
    <citation type="journal article" date="2004" name="Proc. Natl. Acad. Sci. U.S.A.">
        <title>The louse-borne human pathogen Bartonella quintana is a genomic derivative of the zoonotic agent Bartonella henselae.</title>
        <authorList>
            <person name="Alsmark U.C.M."/>
            <person name="Frank A.C."/>
            <person name="Karlberg E.O."/>
            <person name="Legault B.-A."/>
            <person name="Ardell D.H."/>
            <person name="Canbaeck B."/>
            <person name="Eriksson A.-S."/>
            <person name="Naeslund A.K."/>
            <person name="Handley S.A."/>
            <person name="Huvet M."/>
            <person name="La Scola B."/>
            <person name="Holmberg M."/>
            <person name="Andersson S.G.E."/>
        </authorList>
    </citation>
    <scope>NUCLEOTIDE SEQUENCE [LARGE SCALE GENOMIC DNA]</scope>
    <source>
        <strain>Toulouse</strain>
    </source>
</reference>
<dbReference type="EMBL" id="BX897700">
    <property type="protein sequence ID" value="CAF26814.1"/>
    <property type="molecule type" value="Genomic_DNA"/>
</dbReference>
<dbReference type="RefSeq" id="WP_011179968.1">
    <property type="nucleotide sequence ID" value="NC_005955.1"/>
</dbReference>
<dbReference type="SMR" id="Q6FYB9"/>
<dbReference type="KEGG" id="bqu:BQ13560"/>
<dbReference type="eggNOG" id="COG0445">
    <property type="taxonomic scope" value="Bacteria"/>
</dbReference>
<dbReference type="HOGENOM" id="CLU_007831_2_2_5"/>
<dbReference type="OrthoDB" id="9815560at2"/>
<dbReference type="Proteomes" id="UP000000597">
    <property type="component" value="Chromosome"/>
</dbReference>
<dbReference type="GO" id="GO:0005829">
    <property type="term" value="C:cytosol"/>
    <property type="evidence" value="ECO:0007669"/>
    <property type="project" value="TreeGrafter"/>
</dbReference>
<dbReference type="GO" id="GO:0050660">
    <property type="term" value="F:flavin adenine dinucleotide binding"/>
    <property type="evidence" value="ECO:0007669"/>
    <property type="project" value="UniProtKB-UniRule"/>
</dbReference>
<dbReference type="GO" id="GO:0030488">
    <property type="term" value="P:tRNA methylation"/>
    <property type="evidence" value="ECO:0007669"/>
    <property type="project" value="TreeGrafter"/>
</dbReference>
<dbReference type="GO" id="GO:0002098">
    <property type="term" value="P:tRNA wobble uridine modification"/>
    <property type="evidence" value="ECO:0007669"/>
    <property type="project" value="InterPro"/>
</dbReference>
<dbReference type="FunFam" id="1.10.150.570:FF:000001">
    <property type="entry name" value="tRNA uridine 5-carboxymethylaminomethyl modification enzyme MnmG"/>
    <property type="match status" value="1"/>
</dbReference>
<dbReference type="FunFam" id="3.50.50.60:FF:000002">
    <property type="entry name" value="tRNA uridine 5-carboxymethylaminomethyl modification enzyme MnmG"/>
    <property type="match status" value="1"/>
</dbReference>
<dbReference type="Gene3D" id="3.50.50.60">
    <property type="entry name" value="FAD/NAD(P)-binding domain"/>
    <property type="match status" value="2"/>
</dbReference>
<dbReference type="Gene3D" id="1.10.150.570">
    <property type="entry name" value="GidA associated domain, C-terminal subdomain"/>
    <property type="match status" value="1"/>
</dbReference>
<dbReference type="Gene3D" id="1.10.10.1800">
    <property type="entry name" value="tRNA uridine 5-carboxymethylaminomethyl modification enzyme MnmG/GidA"/>
    <property type="match status" value="1"/>
</dbReference>
<dbReference type="HAMAP" id="MF_00129">
    <property type="entry name" value="MnmG_GidA"/>
    <property type="match status" value="1"/>
</dbReference>
<dbReference type="InterPro" id="IPR036188">
    <property type="entry name" value="FAD/NAD-bd_sf"/>
</dbReference>
<dbReference type="InterPro" id="IPR049312">
    <property type="entry name" value="GIDA_C_N"/>
</dbReference>
<dbReference type="InterPro" id="IPR004416">
    <property type="entry name" value="MnmG"/>
</dbReference>
<dbReference type="InterPro" id="IPR002218">
    <property type="entry name" value="MnmG-rel"/>
</dbReference>
<dbReference type="InterPro" id="IPR020595">
    <property type="entry name" value="MnmG-rel_CS"/>
</dbReference>
<dbReference type="InterPro" id="IPR026904">
    <property type="entry name" value="MnmG_C"/>
</dbReference>
<dbReference type="InterPro" id="IPR047001">
    <property type="entry name" value="MnmG_C_subdom"/>
</dbReference>
<dbReference type="InterPro" id="IPR044920">
    <property type="entry name" value="MnmG_C_subdom_sf"/>
</dbReference>
<dbReference type="InterPro" id="IPR040131">
    <property type="entry name" value="MnmG_N"/>
</dbReference>
<dbReference type="NCBIfam" id="TIGR00136">
    <property type="entry name" value="mnmG_gidA"/>
    <property type="match status" value="1"/>
</dbReference>
<dbReference type="PANTHER" id="PTHR11806">
    <property type="entry name" value="GLUCOSE INHIBITED DIVISION PROTEIN A"/>
    <property type="match status" value="1"/>
</dbReference>
<dbReference type="PANTHER" id="PTHR11806:SF0">
    <property type="entry name" value="PROTEIN MTO1 HOMOLOG, MITOCHONDRIAL"/>
    <property type="match status" value="1"/>
</dbReference>
<dbReference type="Pfam" id="PF01134">
    <property type="entry name" value="GIDA"/>
    <property type="match status" value="1"/>
</dbReference>
<dbReference type="Pfam" id="PF21680">
    <property type="entry name" value="GIDA_C_1st"/>
    <property type="match status" value="1"/>
</dbReference>
<dbReference type="Pfam" id="PF13932">
    <property type="entry name" value="SAM_GIDA_C"/>
    <property type="match status" value="1"/>
</dbReference>
<dbReference type="SMART" id="SM01228">
    <property type="entry name" value="GIDA_assoc_3"/>
    <property type="match status" value="1"/>
</dbReference>
<dbReference type="SUPFAM" id="SSF51905">
    <property type="entry name" value="FAD/NAD(P)-binding domain"/>
    <property type="match status" value="1"/>
</dbReference>
<dbReference type="PROSITE" id="PS01280">
    <property type="entry name" value="GIDA_1"/>
    <property type="match status" value="1"/>
</dbReference>
<dbReference type="PROSITE" id="PS01281">
    <property type="entry name" value="GIDA_2"/>
    <property type="match status" value="1"/>
</dbReference>
<name>MNMG_BARQU</name>
<comment type="function">
    <text evidence="1">NAD-binding protein involved in the addition of a carboxymethylaminomethyl (cmnm) group at the wobble position (U34) of certain tRNAs, forming tRNA-cmnm(5)s(2)U34.</text>
</comment>
<comment type="cofactor">
    <cofactor evidence="1">
        <name>FAD</name>
        <dbReference type="ChEBI" id="CHEBI:57692"/>
    </cofactor>
</comment>
<comment type="subunit">
    <text evidence="1">Homodimer. Heterotetramer of two MnmE and two MnmG subunits.</text>
</comment>
<comment type="subcellular location">
    <subcellularLocation>
        <location evidence="1">Cytoplasm</location>
    </subcellularLocation>
</comment>
<comment type="similarity">
    <text evidence="1">Belongs to the MnmG family.</text>
</comment>
<evidence type="ECO:0000255" key="1">
    <source>
        <dbReference type="HAMAP-Rule" id="MF_00129"/>
    </source>
</evidence>
<keyword id="KW-0963">Cytoplasm</keyword>
<keyword id="KW-0274">FAD</keyword>
<keyword id="KW-0285">Flavoprotein</keyword>
<keyword id="KW-0520">NAD</keyword>
<keyword id="KW-0819">tRNA processing</keyword>
<proteinExistence type="inferred from homology"/>
<gene>
    <name evidence="1" type="primary">mnmG</name>
    <name evidence="1" type="synonym">gidA</name>
    <name type="ordered locus">BQ13560</name>
</gene>
<protein>
    <recommendedName>
        <fullName evidence="1">tRNA uridine 5-carboxymethylaminomethyl modification enzyme MnmG</fullName>
    </recommendedName>
    <alternativeName>
        <fullName evidence="1">Glucose-inhibited division protein A</fullName>
    </alternativeName>
</protein>
<feature type="chain" id="PRO_0000117060" description="tRNA uridine 5-carboxymethylaminomethyl modification enzyme MnmG">
    <location>
        <begin position="1"/>
        <end position="622"/>
    </location>
</feature>
<feature type="binding site" evidence="1">
    <location>
        <begin position="10"/>
        <end position="15"/>
    </location>
    <ligand>
        <name>FAD</name>
        <dbReference type="ChEBI" id="CHEBI:57692"/>
    </ligand>
</feature>
<feature type="binding site" evidence="1">
    <location>
        <begin position="269"/>
        <end position="283"/>
    </location>
    <ligand>
        <name>NAD(+)</name>
        <dbReference type="ChEBI" id="CHEBI:57540"/>
    </ligand>
</feature>
<sequence>MQLYDVVIIGGGHAGCEAASASARSGACTALVTHKISALGTMSCNPAIGGLGKGHLVREIDALDGLMGRAADIAGIQFRLLNRRKGPAVRGPRTQADRKLYKKAIQKFLQEQDNLILIEDEAVDLIVKDNCVSGVVLKKQGELFSGAVVLTTGTFLNGLIHIGDKTWAAGRMGEHSSVQLAERLKKYDINLGRLKTGTPARLSKKTINWNCLSKQKADEDPVPFSLLTEKIEQPQIECAITRTNTQTHQIIRENIHRSALYSGMIEGLGPRYCPSVEDKIVKFGERDGHQIFLEPEGLNDDTIYPNGLSTSLPEDVQVALLRTIEGLESVKILQPGYAIEYDFVNPQQLTKTLELRSLPGLFLAGQINGTTGYEEAAAQGLLAGLNAARKVGGLNEIIISRSTAYIGVMVDDLVSRGVSEPYRMFTSRAEFRLSLRSDNADARLTPLAQQWGIVSQKRWDLYQQKQQRLDQARSICQKLFLTPNQASAHGLQVNHDGIRRSAYDLLAYPHMSIERLSHFWQQLQSIDPKTVESLEIEAQYAVYLEKQAQDISALQRDERLEIPSSLDFQTISGLSNELKTKIQKISPRSIADAQKIDGMTPAALSLIITYIQRQRREKAESA</sequence>
<accession>Q6FYB9</accession>
<organism>
    <name type="scientific">Bartonella quintana (strain Toulouse)</name>
    <name type="common">Rochalimaea quintana</name>
    <dbReference type="NCBI Taxonomy" id="283165"/>
    <lineage>
        <taxon>Bacteria</taxon>
        <taxon>Pseudomonadati</taxon>
        <taxon>Pseudomonadota</taxon>
        <taxon>Alphaproteobacteria</taxon>
        <taxon>Hyphomicrobiales</taxon>
        <taxon>Bartonellaceae</taxon>
        <taxon>Bartonella</taxon>
    </lineage>
</organism>